<dbReference type="EC" id="1.6.5.2" evidence="1"/>
<dbReference type="EMBL" id="CP000266">
    <property type="protein sequence ID" value="ABF05400.1"/>
    <property type="molecule type" value="Genomic_DNA"/>
</dbReference>
<dbReference type="RefSeq" id="WP_001445921.1">
    <property type="nucleotide sequence ID" value="NC_008258.1"/>
</dbReference>
<dbReference type="SMR" id="Q0SZW5"/>
<dbReference type="GeneID" id="93778646"/>
<dbReference type="KEGG" id="sfv:SFV_3357"/>
<dbReference type="HOGENOM" id="CLU_058643_0_1_6"/>
<dbReference type="Proteomes" id="UP000000659">
    <property type="component" value="Chromosome"/>
</dbReference>
<dbReference type="GO" id="GO:0005886">
    <property type="term" value="C:plasma membrane"/>
    <property type="evidence" value="ECO:0007669"/>
    <property type="project" value="UniProtKB-SubCell"/>
</dbReference>
<dbReference type="GO" id="GO:0009055">
    <property type="term" value="F:electron transfer activity"/>
    <property type="evidence" value="ECO:0007669"/>
    <property type="project" value="TreeGrafter"/>
</dbReference>
<dbReference type="GO" id="GO:0010181">
    <property type="term" value="F:FMN binding"/>
    <property type="evidence" value="ECO:0007669"/>
    <property type="project" value="TreeGrafter"/>
</dbReference>
<dbReference type="GO" id="GO:0050136">
    <property type="term" value="F:NADH:ubiquinone reductase (non-electrogenic) activity"/>
    <property type="evidence" value="ECO:0007669"/>
    <property type="project" value="RHEA"/>
</dbReference>
<dbReference type="GO" id="GO:0008753">
    <property type="term" value="F:NADPH dehydrogenase (quinone) activity"/>
    <property type="evidence" value="ECO:0007669"/>
    <property type="project" value="RHEA"/>
</dbReference>
<dbReference type="GO" id="GO:1901381">
    <property type="term" value="P:positive regulation of potassium ion transmembrane transport"/>
    <property type="evidence" value="ECO:0007669"/>
    <property type="project" value="UniProtKB-UniRule"/>
</dbReference>
<dbReference type="GO" id="GO:0006813">
    <property type="term" value="P:potassium ion transport"/>
    <property type="evidence" value="ECO:0007669"/>
    <property type="project" value="InterPro"/>
</dbReference>
<dbReference type="FunFam" id="3.40.50.360:FF:000013">
    <property type="entry name" value="Glutathione-regulated potassium-efflux system ancillary protein KefG"/>
    <property type="match status" value="1"/>
</dbReference>
<dbReference type="Gene3D" id="3.40.50.360">
    <property type="match status" value="1"/>
</dbReference>
<dbReference type="HAMAP" id="MF_01415">
    <property type="entry name" value="K_H_efflux_KefG"/>
    <property type="match status" value="1"/>
</dbReference>
<dbReference type="InterPro" id="IPR003680">
    <property type="entry name" value="Flavodoxin_fold"/>
</dbReference>
<dbReference type="InterPro" id="IPR029039">
    <property type="entry name" value="Flavoprotein-like_sf"/>
</dbReference>
<dbReference type="InterPro" id="IPR023947">
    <property type="entry name" value="K_H_efflux_KefG"/>
</dbReference>
<dbReference type="InterPro" id="IPR046980">
    <property type="entry name" value="KefG/KefF"/>
</dbReference>
<dbReference type="NCBIfam" id="NF003430">
    <property type="entry name" value="PRK04930.1"/>
    <property type="match status" value="1"/>
</dbReference>
<dbReference type="PANTHER" id="PTHR47307">
    <property type="entry name" value="GLUTATHIONE-REGULATED POTASSIUM-EFFLUX SYSTEM ANCILLARY PROTEIN KEFG"/>
    <property type="match status" value="1"/>
</dbReference>
<dbReference type="PANTHER" id="PTHR47307:SF1">
    <property type="entry name" value="GLUTATHIONE-REGULATED POTASSIUM-EFFLUX SYSTEM ANCILLARY PROTEIN KEFG"/>
    <property type="match status" value="1"/>
</dbReference>
<dbReference type="Pfam" id="PF02525">
    <property type="entry name" value="Flavodoxin_2"/>
    <property type="match status" value="1"/>
</dbReference>
<dbReference type="SUPFAM" id="SSF52218">
    <property type="entry name" value="Flavoproteins"/>
    <property type="match status" value="1"/>
</dbReference>
<keyword id="KW-0997">Cell inner membrane</keyword>
<keyword id="KW-1003">Cell membrane</keyword>
<keyword id="KW-0472">Membrane</keyword>
<keyword id="KW-0520">NAD</keyword>
<keyword id="KW-0560">Oxidoreductase</keyword>
<sequence length="183" mass="20854">MSQPAKVLLLYAHPESQDSVANRVLLKPATQLSNVTVHDLYAHYPDFFIDIPREQALLREHEVIVFQHPLYTYSCPALLKEWLDRVLSRGFASGPGGNQLAGKYWRNVITTGEPESAYRYDALNRYPMSDVLRPFELAAGMCRMHWLSPIIIYWARRQSAKELASHARAYGDWLANPLSPGGR</sequence>
<protein>
    <recommendedName>
        <fullName evidence="1">Glutathione-regulated potassium-efflux system ancillary protein KefG</fullName>
    </recommendedName>
    <alternativeName>
        <fullName evidence="1">Putative quinone oxidoreductase KefG</fullName>
        <ecNumber evidence="1">1.6.5.2</ecNumber>
    </alternativeName>
</protein>
<gene>
    <name evidence="1" type="primary">kefG</name>
    <name type="ordered locus">SFV_3357</name>
</gene>
<accession>Q0SZW5</accession>
<evidence type="ECO:0000255" key="1">
    <source>
        <dbReference type="HAMAP-Rule" id="MF_01415"/>
    </source>
</evidence>
<name>KEFG_SHIF8</name>
<organism>
    <name type="scientific">Shigella flexneri serotype 5b (strain 8401)</name>
    <dbReference type="NCBI Taxonomy" id="373384"/>
    <lineage>
        <taxon>Bacteria</taxon>
        <taxon>Pseudomonadati</taxon>
        <taxon>Pseudomonadota</taxon>
        <taxon>Gammaproteobacteria</taxon>
        <taxon>Enterobacterales</taxon>
        <taxon>Enterobacteriaceae</taxon>
        <taxon>Shigella</taxon>
    </lineage>
</organism>
<feature type="chain" id="PRO_1000068484" description="Glutathione-regulated potassium-efflux system ancillary protein KefG">
    <location>
        <begin position="1"/>
        <end position="183"/>
    </location>
</feature>
<reference key="1">
    <citation type="journal article" date="2006" name="BMC Genomics">
        <title>Complete genome sequence of Shigella flexneri 5b and comparison with Shigella flexneri 2a.</title>
        <authorList>
            <person name="Nie H."/>
            <person name="Yang F."/>
            <person name="Zhang X."/>
            <person name="Yang J."/>
            <person name="Chen L."/>
            <person name="Wang J."/>
            <person name="Xiong Z."/>
            <person name="Peng J."/>
            <person name="Sun L."/>
            <person name="Dong J."/>
            <person name="Xue Y."/>
            <person name="Xu X."/>
            <person name="Chen S."/>
            <person name="Yao Z."/>
            <person name="Shen Y."/>
            <person name="Jin Q."/>
        </authorList>
    </citation>
    <scope>NUCLEOTIDE SEQUENCE [LARGE SCALE GENOMIC DNA]</scope>
    <source>
        <strain>8401</strain>
    </source>
</reference>
<comment type="function">
    <text evidence="1">Regulatory subunit of a potassium efflux system that confers protection against electrophiles. Required for full activity of KefB.</text>
</comment>
<comment type="catalytic activity">
    <reaction evidence="1">
        <text>a quinone + NADH + H(+) = a quinol + NAD(+)</text>
        <dbReference type="Rhea" id="RHEA:46160"/>
        <dbReference type="ChEBI" id="CHEBI:15378"/>
        <dbReference type="ChEBI" id="CHEBI:24646"/>
        <dbReference type="ChEBI" id="CHEBI:57540"/>
        <dbReference type="ChEBI" id="CHEBI:57945"/>
        <dbReference type="ChEBI" id="CHEBI:132124"/>
        <dbReference type="EC" id="1.6.5.2"/>
    </reaction>
</comment>
<comment type="catalytic activity">
    <reaction evidence="1">
        <text>a quinone + NADPH + H(+) = a quinol + NADP(+)</text>
        <dbReference type="Rhea" id="RHEA:46164"/>
        <dbReference type="ChEBI" id="CHEBI:15378"/>
        <dbReference type="ChEBI" id="CHEBI:24646"/>
        <dbReference type="ChEBI" id="CHEBI:57783"/>
        <dbReference type="ChEBI" id="CHEBI:58349"/>
        <dbReference type="ChEBI" id="CHEBI:132124"/>
        <dbReference type="EC" id="1.6.5.2"/>
    </reaction>
</comment>
<comment type="subunit">
    <text evidence="1">Interacts with KefB.</text>
</comment>
<comment type="subcellular location">
    <subcellularLocation>
        <location evidence="1">Cell inner membrane</location>
        <topology evidence="1">Peripheral membrane protein</topology>
        <orientation evidence="1">Cytoplasmic side</orientation>
    </subcellularLocation>
</comment>
<comment type="similarity">
    <text evidence="1">Belongs to the NAD(P)H dehydrogenase (quinone) family. KefG subfamily.</text>
</comment>
<proteinExistence type="inferred from homology"/>